<proteinExistence type="inferred from homology"/>
<dbReference type="EC" id="2.7.4.22" evidence="1"/>
<dbReference type="EMBL" id="AE004437">
    <property type="protein sequence ID" value="AAG20182.1"/>
    <property type="molecule type" value="Genomic_DNA"/>
</dbReference>
<dbReference type="PIR" id="B84352">
    <property type="entry name" value="B84352"/>
</dbReference>
<dbReference type="RefSeq" id="WP_010903483.1">
    <property type="nucleotide sequence ID" value="NC_002607.1"/>
</dbReference>
<dbReference type="SMR" id="Q9HNN8"/>
<dbReference type="FunCoup" id="Q9HNN8">
    <property type="interactions" value="124"/>
</dbReference>
<dbReference type="STRING" id="64091.VNG_2015C"/>
<dbReference type="PaxDb" id="64091-VNG_2015C"/>
<dbReference type="GeneID" id="89350199"/>
<dbReference type="KEGG" id="hal:VNG_2015C"/>
<dbReference type="PATRIC" id="fig|64091.14.peg.1539"/>
<dbReference type="HOGENOM" id="CLU_079546_0_0_2"/>
<dbReference type="InParanoid" id="Q9HNN8"/>
<dbReference type="OrthoDB" id="372251at2157"/>
<dbReference type="PhylomeDB" id="Q9HNN8"/>
<dbReference type="UniPathway" id="UPA00159">
    <property type="reaction ID" value="UER00275"/>
</dbReference>
<dbReference type="Proteomes" id="UP000000554">
    <property type="component" value="Chromosome"/>
</dbReference>
<dbReference type="GO" id="GO:0005737">
    <property type="term" value="C:cytoplasm"/>
    <property type="evidence" value="ECO:0007669"/>
    <property type="project" value="UniProtKB-SubCell"/>
</dbReference>
<dbReference type="GO" id="GO:0005524">
    <property type="term" value="F:ATP binding"/>
    <property type="evidence" value="ECO:0007669"/>
    <property type="project" value="UniProtKB-KW"/>
</dbReference>
<dbReference type="GO" id="GO:0033862">
    <property type="term" value="F:UMP kinase activity"/>
    <property type="evidence" value="ECO:0000318"/>
    <property type="project" value="GO_Central"/>
</dbReference>
<dbReference type="GO" id="GO:0044210">
    <property type="term" value="P:'de novo' CTP biosynthetic process"/>
    <property type="evidence" value="ECO:0007669"/>
    <property type="project" value="UniProtKB-UniRule"/>
</dbReference>
<dbReference type="GO" id="GO:0006225">
    <property type="term" value="P:UDP biosynthetic process"/>
    <property type="evidence" value="ECO:0000318"/>
    <property type="project" value="GO_Central"/>
</dbReference>
<dbReference type="CDD" id="cd04253">
    <property type="entry name" value="AAK_UMPK-PyrH-Pf"/>
    <property type="match status" value="1"/>
</dbReference>
<dbReference type="Gene3D" id="3.40.1160.10">
    <property type="entry name" value="Acetylglutamate kinase-like"/>
    <property type="match status" value="1"/>
</dbReference>
<dbReference type="HAMAP" id="MF_01220_A">
    <property type="entry name" value="PyrH_A"/>
    <property type="match status" value="1"/>
</dbReference>
<dbReference type="InterPro" id="IPR036393">
    <property type="entry name" value="AceGlu_kinase-like_sf"/>
</dbReference>
<dbReference type="InterPro" id="IPR001048">
    <property type="entry name" value="Asp/Glu/Uridylate_kinase"/>
</dbReference>
<dbReference type="InterPro" id="IPR011817">
    <property type="entry name" value="Uridylate_kinase"/>
</dbReference>
<dbReference type="InterPro" id="IPR011818">
    <property type="entry name" value="Uridylate_kinase_arch/spir"/>
</dbReference>
<dbReference type="NCBIfam" id="TIGR02076">
    <property type="entry name" value="pyrH_arch"/>
    <property type="match status" value="1"/>
</dbReference>
<dbReference type="PANTHER" id="PTHR42833">
    <property type="entry name" value="URIDYLATE KINASE"/>
    <property type="match status" value="1"/>
</dbReference>
<dbReference type="PANTHER" id="PTHR42833:SF4">
    <property type="entry name" value="URIDYLATE KINASE PUMPKIN, CHLOROPLASTIC"/>
    <property type="match status" value="1"/>
</dbReference>
<dbReference type="Pfam" id="PF00696">
    <property type="entry name" value="AA_kinase"/>
    <property type="match status" value="1"/>
</dbReference>
<dbReference type="PIRSF" id="PIRSF005650">
    <property type="entry name" value="Uridylate_kin"/>
    <property type="match status" value="1"/>
</dbReference>
<dbReference type="SUPFAM" id="SSF53633">
    <property type="entry name" value="Carbamate kinase-like"/>
    <property type="match status" value="1"/>
</dbReference>
<protein>
    <recommendedName>
        <fullName evidence="1">Uridylate kinase</fullName>
        <shortName evidence="1">UK</shortName>
        <ecNumber evidence="1">2.7.4.22</ecNumber>
    </recommendedName>
    <alternativeName>
        <fullName evidence="1">Uridine monophosphate kinase</fullName>
        <shortName evidence="1">UMP kinase</shortName>
        <shortName evidence="1">UMPK</shortName>
    </alternativeName>
</protein>
<gene>
    <name evidence="1" type="primary">pyrH</name>
    <name type="ordered locus">VNG_2015C</name>
</gene>
<comment type="function">
    <text evidence="1">Catalyzes the reversible phosphorylation of UMP to UDP.</text>
</comment>
<comment type="catalytic activity">
    <reaction evidence="1">
        <text>UMP + ATP = UDP + ADP</text>
        <dbReference type="Rhea" id="RHEA:24400"/>
        <dbReference type="ChEBI" id="CHEBI:30616"/>
        <dbReference type="ChEBI" id="CHEBI:57865"/>
        <dbReference type="ChEBI" id="CHEBI:58223"/>
        <dbReference type="ChEBI" id="CHEBI:456216"/>
        <dbReference type="EC" id="2.7.4.22"/>
    </reaction>
</comment>
<comment type="activity regulation">
    <text evidence="1">Inhibited by UTP.</text>
</comment>
<comment type="pathway">
    <text evidence="1">Pyrimidine metabolism; CTP biosynthesis via de novo pathway; UDP from UMP (UMPK route): step 1/1.</text>
</comment>
<comment type="subunit">
    <text evidence="1">Homohexamer.</text>
</comment>
<comment type="subcellular location">
    <subcellularLocation>
        <location evidence="1">Cytoplasm</location>
    </subcellularLocation>
</comment>
<comment type="similarity">
    <text evidence="1">Belongs to the UMP kinase family.</text>
</comment>
<sequence>MRVVVSIGGSVLAPGLDADQVDAHADAINELTDAGCEVGAVVGGGGVARDYIGTARELGANEIELDDIGVDVTRLNARLLIAALGGDAAPSPAEDYEDAGEAMRRGDIAVMGGVVAGQTTDAVSAALAEYTDADLLLYATSVPGVFSADPNEDADAEHFTRMTAGELVDIIADIEMNAGSSAPVDLLAAKLIERSGVRTIVLDGTDPRRIVDAVRFGEHDGTDVIPDGTDNQMTYWADNQE</sequence>
<organism>
    <name type="scientific">Halobacterium salinarum (strain ATCC 700922 / JCM 11081 / NRC-1)</name>
    <name type="common">Halobacterium halobium</name>
    <dbReference type="NCBI Taxonomy" id="64091"/>
    <lineage>
        <taxon>Archaea</taxon>
        <taxon>Methanobacteriati</taxon>
        <taxon>Methanobacteriota</taxon>
        <taxon>Stenosarchaea group</taxon>
        <taxon>Halobacteria</taxon>
        <taxon>Halobacteriales</taxon>
        <taxon>Halobacteriaceae</taxon>
        <taxon>Halobacterium</taxon>
        <taxon>Halobacterium salinarum NRC-34001</taxon>
    </lineage>
</organism>
<feature type="chain" id="PRO_0000143915" description="Uridylate kinase">
    <location>
        <begin position="1"/>
        <end position="241"/>
    </location>
</feature>
<feature type="binding site" evidence="1">
    <location>
        <begin position="9"/>
        <end position="10"/>
    </location>
    <ligand>
        <name>ATP</name>
        <dbReference type="ChEBI" id="CHEBI:30616"/>
    </ligand>
</feature>
<feature type="binding site" evidence="1">
    <location>
        <position position="44"/>
    </location>
    <ligand>
        <name>UMP</name>
        <dbReference type="ChEBI" id="CHEBI:57865"/>
    </ligand>
</feature>
<feature type="binding site" evidence="1">
    <location>
        <position position="45"/>
    </location>
    <ligand>
        <name>ATP</name>
        <dbReference type="ChEBI" id="CHEBI:30616"/>
    </ligand>
</feature>
<feature type="binding site" evidence="1">
    <location>
        <position position="49"/>
    </location>
    <ligand>
        <name>ATP</name>
        <dbReference type="ChEBI" id="CHEBI:30616"/>
    </ligand>
</feature>
<feature type="binding site" evidence="1">
    <location>
        <position position="66"/>
    </location>
    <ligand>
        <name>UMP</name>
        <dbReference type="ChEBI" id="CHEBI:57865"/>
    </ligand>
</feature>
<feature type="binding site" evidence="1">
    <location>
        <begin position="114"/>
        <end position="120"/>
    </location>
    <ligand>
        <name>UMP</name>
        <dbReference type="ChEBI" id="CHEBI:57865"/>
    </ligand>
</feature>
<feature type="binding site" evidence="1">
    <location>
        <position position="140"/>
    </location>
    <ligand>
        <name>ATP</name>
        <dbReference type="ChEBI" id="CHEBI:30616"/>
    </ligand>
</feature>
<feature type="binding site" evidence="1">
    <location>
        <position position="146"/>
    </location>
    <ligand>
        <name>ATP</name>
        <dbReference type="ChEBI" id="CHEBI:30616"/>
    </ligand>
</feature>
<feature type="binding site" evidence="1">
    <location>
        <position position="149"/>
    </location>
    <ligand>
        <name>ATP</name>
        <dbReference type="ChEBI" id="CHEBI:30616"/>
    </ligand>
</feature>
<reference key="1">
    <citation type="journal article" date="2000" name="Proc. Natl. Acad. Sci. U.S.A.">
        <title>Genome sequence of Halobacterium species NRC-1.</title>
        <authorList>
            <person name="Ng W.V."/>
            <person name="Kennedy S.P."/>
            <person name="Mahairas G.G."/>
            <person name="Berquist B."/>
            <person name="Pan M."/>
            <person name="Shukla H.D."/>
            <person name="Lasky S.R."/>
            <person name="Baliga N.S."/>
            <person name="Thorsson V."/>
            <person name="Sbrogna J."/>
            <person name="Swartzell S."/>
            <person name="Weir D."/>
            <person name="Hall J."/>
            <person name="Dahl T.A."/>
            <person name="Welti R."/>
            <person name="Goo Y.A."/>
            <person name="Leithauser B."/>
            <person name="Keller K."/>
            <person name="Cruz R."/>
            <person name="Danson M.J."/>
            <person name="Hough D.W."/>
            <person name="Maddocks D.G."/>
            <person name="Jablonski P.E."/>
            <person name="Krebs M.P."/>
            <person name="Angevine C.M."/>
            <person name="Dale H."/>
            <person name="Isenbarger T.A."/>
            <person name="Peck R.F."/>
            <person name="Pohlschroder M."/>
            <person name="Spudich J.L."/>
            <person name="Jung K.-H."/>
            <person name="Alam M."/>
            <person name="Freitas T."/>
            <person name="Hou S."/>
            <person name="Daniels C.J."/>
            <person name="Dennis P.P."/>
            <person name="Omer A.D."/>
            <person name="Ebhardt H."/>
            <person name="Lowe T.M."/>
            <person name="Liang P."/>
            <person name="Riley M."/>
            <person name="Hood L."/>
            <person name="DasSarma S."/>
        </authorList>
    </citation>
    <scope>NUCLEOTIDE SEQUENCE [LARGE SCALE GENOMIC DNA]</scope>
    <source>
        <strain>ATCC 700922 / JCM 11081 / NRC-1</strain>
    </source>
</reference>
<name>PYRH_HALSA</name>
<evidence type="ECO:0000255" key="1">
    <source>
        <dbReference type="HAMAP-Rule" id="MF_01220"/>
    </source>
</evidence>
<accession>Q9HNN8</accession>
<keyword id="KW-0067">ATP-binding</keyword>
<keyword id="KW-0963">Cytoplasm</keyword>
<keyword id="KW-0418">Kinase</keyword>
<keyword id="KW-0547">Nucleotide-binding</keyword>
<keyword id="KW-0665">Pyrimidine biosynthesis</keyword>
<keyword id="KW-1185">Reference proteome</keyword>
<keyword id="KW-0808">Transferase</keyword>